<comment type="function">
    <text evidence="1">Cell wall formation. Adds enolpyruvyl to UDP-N-acetylglucosamine.</text>
</comment>
<comment type="catalytic activity">
    <reaction evidence="1">
        <text>phosphoenolpyruvate + UDP-N-acetyl-alpha-D-glucosamine = UDP-N-acetyl-3-O-(1-carboxyvinyl)-alpha-D-glucosamine + phosphate</text>
        <dbReference type="Rhea" id="RHEA:18681"/>
        <dbReference type="ChEBI" id="CHEBI:43474"/>
        <dbReference type="ChEBI" id="CHEBI:57705"/>
        <dbReference type="ChEBI" id="CHEBI:58702"/>
        <dbReference type="ChEBI" id="CHEBI:68483"/>
        <dbReference type="EC" id="2.5.1.7"/>
    </reaction>
</comment>
<comment type="pathway">
    <text evidence="1">Cell wall biogenesis; peptidoglycan biosynthesis.</text>
</comment>
<comment type="subcellular location">
    <subcellularLocation>
        <location evidence="1">Cytoplasm</location>
    </subcellularLocation>
</comment>
<comment type="similarity">
    <text evidence="1">Belongs to the EPSP synthase family. MurA subfamily.</text>
</comment>
<feature type="chain" id="PRO_1000075986" description="UDP-N-acetylglucosamine 1-carboxyvinyltransferase">
    <location>
        <begin position="1"/>
        <end position="422"/>
    </location>
</feature>
<feature type="active site" description="Proton donor" evidence="1">
    <location>
        <position position="116"/>
    </location>
</feature>
<feature type="binding site" evidence="1">
    <location>
        <begin position="22"/>
        <end position="23"/>
    </location>
    <ligand>
        <name>phosphoenolpyruvate</name>
        <dbReference type="ChEBI" id="CHEBI:58702"/>
    </ligand>
</feature>
<feature type="binding site" evidence="1">
    <location>
        <position position="92"/>
    </location>
    <ligand>
        <name>UDP-N-acetyl-alpha-D-glucosamine</name>
        <dbReference type="ChEBI" id="CHEBI:57705"/>
    </ligand>
</feature>
<feature type="binding site" evidence="1">
    <location>
        <begin position="121"/>
        <end position="125"/>
    </location>
    <ligand>
        <name>UDP-N-acetyl-alpha-D-glucosamine</name>
        <dbReference type="ChEBI" id="CHEBI:57705"/>
    </ligand>
</feature>
<feature type="binding site" evidence="1">
    <location>
        <position position="305"/>
    </location>
    <ligand>
        <name>UDP-N-acetyl-alpha-D-glucosamine</name>
        <dbReference type="ChEBI" id="CHEBI:57705"/>
    </ligand>
</feature>
<feature type="binding site" evidence="1">
    <location>
        <position position="327"/>
    </location>
    <ligand>
        <name>UDP-N-acetyl-alpha-D-glucosamine</name>
        <dbReference type="ChEBI" id="CHEBI:57705"/>
    </ligand>
</feature>
<feature type="modified residue" description="2-(S-cysteinyl)pyruvic acid O-phosphothioketal" evidence="1">
    <location>
        <position position="116"/>
    </location>
</feature>
<keyword id="KW-0131">Cell cycle</keyword>
<keyword id="KW-0132">Cell division</keyword>
<keyword id="KW-0133">Cell shape</keyword>
<keyword id="KW-0961">Cell wall biogenesis/degradation</keyword>
<keyword id="KW-0963">Cytoplasm</keyword>
<keyword id="KW-0573">Peptidoglycan synthesis</keyword>
<keyword id="KW-0670">Pyruvate</keyword>
<keyword id="KW-1185">Reference proteome</keyword>
<keyword id="KW-0808">Transferase</keyword>
<sequence length="422" mass="44964">MDSIRIRGGKPLSGKIRISGAKNAALPILCATLLSDGESLLRNVPALRDIETTSALLRFLGRNVETAPPLVKVGAGDNVRPEAPYELVKQMRASVMVLGPLLARFGRAKVSLPGGCQIGTRPVDQHLKGLEALGATIRLSRGYIVAECKRLRGAEVVFDLPTVTGTENLMMAAALAKGRTTLVNCAREPEVEELGRVLNKMGARVSGAGTDVIHIEGADELEPFDHAIISDRIEAGTYMVAAAAAGGDVLIENAPLEDLEAVAAKLRQAGVEVGREGDCVRVRREGRPLRAVDVTTAPHPGFPTDMQAQFMVLMCLAQGTSRIVETIFENRFMHVPELARMGAHIDVDGHTAHVHGGAPLSGATVMATDLRASASLVIAGLVATEGETEVLRVYHLDRGYEFMERKLAQLGADTARVEGRDG</sequence>
<proteinExistence type="inferred from homology"/>
<protein>
    <recommendedName>
        <fullName evidence="1">UDP-N-acetylglucosamine 1-carboxyvinyltransferase</fullName>
        <ecNumber evidence="1">2.5.1.7</ecNumber>
    </recommendedName>
    <alternativeName>
        <fullName evidence="1">Enoylpyruvate transferase</fullName>
    </alternativeName>
    <alternativeName>
        <fullName evidence="1">UDP-N-acetylglucosamine enolpyruvyl transferase</fullName>
        <shortName evidence="1">EPT</shortName>
    </alternativeName>
</protein>
<gene>
    <name evidence="1" type="primary">murA</name>
    <name type="ordered locus">sce9145</name>
</gene>
<accession>A9GD73</accession>
<evidence type="ECO:0000255" key="1">
    <source>
        <dbReference type="HAMAP-Rule" id="MF_00111"/>
    </source>
</evidence>
<dbReference type="EC" id="2.5.1.7" evidence="1"/>
<dbReference type="EMBL" id="AM746676">
    <property type="protein sequence ID" value="CAN99318.1"/>
    <property type="molecule type" value="Genomic_DNA"/>
</dbReference>
<dbReference type="RefSeq" id="WP_012241754.1">
    <property type="nucleotide sequence ID" value="NC_010162.1"/>
</dbReference>
<dbReference type="SMR" id="A9GD73"/>
<dbReference type="STRING" id="448385.sce9145"/>
<dbReference type="KEGG" id="scl:sce9145"/>
<dbReference type="eggNOG" id="COG0766">
    <property type="taxonomic scope" value="Bacteria"/>
</dbReference>
<dbReference type="HOGENOM" id="CLU_027387_0_0_7"/>
<dbReference type="OrthoDB" id="9803760at2"/>
<dbReference type="BioCyc" id="SCEL448385:SCE_RS46810-MONOMER"/>
<dbReference type="UniPathway" id="UPA00219"/>
<dbReference type="Proteomes" id="UP000002139">
    <property type="component" value="Chromosome"/>
</dbReference>
<dbReference type="GO" id="GO:0005737">
    <property type="term" value="C:cytoplasm"/>
    <property type="evidence" value="ECO:0007669"/>
    <property type="project" value="UniProtKB-SubCell"/>
</dbReference>
<dbReference type="GO" id="GO:0008760">
    <property type="term" value="F:UDP-N-acetylglucosamine 1-carboxyvinyltransferase activity"/>
    <property type="evidence" value="ECO:0007669"/>
    <property type="project" value="UniProtKB-UniRule"/>
</dbReference>
<dbReference type="GO" id="GO:0051301">
    <property type="term" value="P:cell division"/>
    <property type="evidence" value="ECO:0007669"/>
    <property type="project" value="UniProtKB-KW"/>
</dbReference>
<dbReference type="GO" id="GO:0071555">
    <property type="term" value="P:cell wall organization"/>
    <property type="evidence" value="ECO:0007669"/>
    <property type="project" value="UniProtKB-KW"/>
</dbReference>
<dbReference type="GO" id="GO:0009252">
    <property type="term" value="P:peptidoglycan biosynthetic process"/>
    <property type="evidence" value="ECO:0007669"/>
    <property type="project" value="UniProtKB-UniRule"/>
</dbReference>
<dbReference type="GO" id="GO:0008360">
    <property type="term" value="P:regulation of cell shape"/>
    <property type="evidence" value="ECO:0007669"/>
    <property type="project" value="UniProtKB-KW"/>
</dbReference>
<dbReference type="GO" id="GO:0019277">
    <property type="term" value="P:UDP-N-acetylgalactosamine biosynthetic process"/>
    <property type="evidence" value="ECO:0007669"/>
    <property type="project" value="InterPro"/>
</dbReference>
<dbReference type="CDD" id="cd01555">
    <property type="entry name" value="UdpNAET"/>
    <property type="match status" value="1"/>
</dbReference>
<dbReference type="FunFam" id="3.65.10.10:FF:000001">
    <property type="entry name" value="UDP-N-acetylglucosamine 1-carboxyvinyltransferase"/>
    <property type="match status" value="1"/>
</dbReference>
<dbReference type="Gene3D" id="3.65.10.10">
    <property type="entry name" value="Enolpyruvate transferase domain"/>
    <property type="match status" value="2"/>
</dbReference>
<dbReference type="HAMAP" id="MF_00111">
    <property type="entry name" value="MurA"/>
    <property type="match status" value="1"/>
</dbReference>
<dbReference type="InterPro" id="IPR001986">
    <property type="entry name" value="Enolpyruvate_Tfrase_dom"/>
</dbReference>
<dbReference type="InterPro" id="IPR036968">
    <property type="entry name" value="Enolpyruvate_Tfrase_sf"/>
</dbReference>
<dbReference type="InterPro" id="IPR050068">
    <property type="entry name" value="MurA_subfamily"/>
</dbReference>
<dbReference type="InterPro" id="IPR013792">
    <property type="entry name" value="RNA3'P_cycl/enolpyr_Trfase_a/b"/>
</dbReference>
<dbReference type="InterPro" id="IPR005750">
    <property type="entry name" value="UDP_GlcNAc_COvinyl_MurA"/>
</dbReference>
<dbReference type="NCBIfam" id="TIGR01072">
    <property type="entry name" value="murA"/>
    <property type="match status" value="1"/>
</dbReference>
<dbReference type="NCBIfam" id="NF006873">
    <property type="entry name" value="PRK09369.1"/>
    <property type="match status" value="1"/>
</dbReference>
<dbReference type="PANTHER" id="PTHR43783">
    <property type="entry name" value="UDP-N-ACETYLGLUCOSAMINE 1-CARBOXYVINYLTRANSFERASE"/>
    <property type="match status" value="1"/>
</dbReference>
<dbReference type="PANTHER" id="PTHR43783:SF1">
    <property type="entry name" value="UDP-N-ACETYLGLUCOSAMINE 1-CARBOXYVINYLTRANSFERASE"/>
    <property type="match status" value="1"/>
</dbReference>
<dbReference type="Pfam" id="PF00275">
    <property type="entry name" value="EPSP_synthase"/>
    <property type="match status" value="1"/>
</dbReference>
<dbReference type="SUPFAM" id="SSF55205">
    <property type="entry name" value="EPT/RTPC-like"/>
    <property type="match status" value="1"/>
</dbReference>
<reference key="1">
    <citation type="journal article" date="2007" name="Nat. Biotechnol.">
        <title>Complete genome sequence of the myxobacterium Sorangium cellulosum.</title>
        <authorList>
            <person name="Schneiker S."/>
            <person name="Perlova O."/>
            <person name="Kaiser O."/>
            <person name="Gerth K."/>
            <person name="Alici A."/>
            <person name="Altmeyer M.O."/>
            <person name="Bartels D."/>
            <person name="Bekel T."/>
            <person name="Beyer S."/>
            <person name="Bode E."/>
            <person name="Bode H.B."/>
            <person name="Bolten C.J."/>
            <person name="Choudhuri J.V."/>
            <person name="Doss S."/>
            <person name="Elnakady Y.A."/>
            <person name="Frank B."/>
            <person name="Gaigalat L."/>
            <person name="Goesmann A."/>
            <person name="Groeger C."/>
            <person name="Gross F."/>
            <person name="Jelsbak L."/>
            <person name="Jelsbak L."/>
            <person name="Kalinowski J."/>
            <person name="Kegler C."/>
            <person name="Knauber T."/>
            <person name="Konietzny S."/>
            <person name="Kopp M."/>
            <person name="Krause L."/>
            <person name="Krug D."/>
            <person name="Linke B."/>
            <person name="Mahmud T."/>
            <person name="Martinez-Arias R."/>
            <person name="McHardy A.C."/>
            <person name="Merai M."/>
            <person name="Meyer F."/>
            <person name="Mormann S."/>
            <person name="Munoz-Dorado J."/>
            <person name="Perez J."/>
            <person name="Pradella S."/>
            <person name="Rachid S."/>
            <person name="Raddatz G."/>
            <person name="Rosenau F."/>
            <person name="Rueckert C."/>
            <person name="Sasse F."/>
            <person name="Scharfe M."/>
            <person name="Schuster S.C."/>
            <person name="Suen G."/>
            <person name="Treuner-Lange A."/>
            <person name="Velicer G.J."/>
            <person name="Vorholter F.-J."/>
            <person name="Weissman K.J."/>
            <person name="Welch R.D."/>
            <person name="Wenzel S.C."/>
            <person name="Whitworth D.E."/>
            <person name="Wilhelm S."/>
            <person name="Wittmann C."/>
            <person name="Bloecker H."/>
            <person name="Puehler A."/>
            <person name="Mueller R."/>
        </authorList>
    </citation>
    <scope>NUCLEOTIDE SEQUENCE [LARGE SCALE GENOMIC DNA]</scope>
    <source>
        <strain>So ce56</strain>
    </source>
</reference>
<name>MURA_SORC5</name>
<organism>
    <name type="scientific">Sorangium cellulosum (strain So ce56)</name>
    <name type="common">Polyangium cellulosum (strain So ce56)</name>
    <dbReference type="NCBI Taxonomy" id="448385"/>
    <lineage>
        <taxon>Bacteria</taxon>
        <taxon>Pseudomonadati</taxon>
        <taxon>Myxococcota</taxon>
        <taxon>Polyangia</taxon>
        <taxon>Polyangiales</taxon>
        <taxon>Polyangiaceae</taxon>
        <taxon>Sorangium</taxon>
    </lineage>
</organism>